<organism>
    <name type="scientific">Bordetella bronchiseptica (strain ATCC BAA-588 / NCTC 13252 / RB50)</name>
    <name type="common">Alcaligenes bronchisepticus</name>
    <dbReference type="NCBI Taxonomy" id="257310"/>
    <lineage>
        <taxon>Bacteria</taxon>
        <taxon>Pseudomonadati</taxon>
        <taxon>Pseudomonadota</taxon>
        <taxon>Betaproteobacteria</taxon>
        <taxon>Burkholderiales</taxon>
        <taxon>Alcaligenaceae</taxon>
        <taxon>Bordetella</taxon>
    </lineage>
</organism>
<evidence type="ECO:0000255" key="1">
    <source>
        <dbReference type="HAMAP-Rule" id="MF_00014"/>
    </source>
</evidence>
<protein>
    <recommendedName>
        <fullName evidence="1">Ribosome maturation factor RimM</fullName>
    </recommendedName>
</protein>
<sequence>MSEAAHSGAAPADLVELGRIASAYGVKGWVKVQPHSAQAEVLRTVSHWWLTRPAPQAARGVVASVPRAYQVLQARVHGGAVVAQLAGIDDRDQAEALRGCLVQAARSAFPAPADDEYYWVDLIGCALYSDADGESRLLGVVDEVFDNGAHAVLKVLRQQLQPGQPGPVPLVDPKGRPLEELVPFVRAHIRHVDLAARRIDSDWPLDY</sequence>
<accession>Q7WHM0</accession>
<gene>
    <name evidence="1" type="primary">rimM</name>
    <name type="ordered locus">BB3187</name>
</gene>
<reference key="1">
    <citation type="journal article" date="2003" name="Nat. Genet.">
        <title>Comparative analysis of the genome sequences of Bordetella pertussis, Bordetella parapertussis and Bordetella bronchiseptica.</title>
        <authorList>
            <person name="Parkhill J."/>
            <person name="Sebaihia M."/>
            <person name="Preston A."/>
            <person name="Murphy L.D."/>
            <person name="Thomson N.R."/>
            <person name="Harris D.E."/>
            <person name="Holden M.T.G."/>
            <person name="Churcher C.M."/>
            <person name="Bentley S.D."/>
            <person name="Mungall K.L."/>
            <person name="Cerdeno-Tarraga A.-M."/>
            <person name="Temple L."/>
            <person name="James K.D."/>
            <person name="Harris B."/>
            <person name="Quail M.A."/>
            <person name="Achtman M."/>
            <person name="Atkin R."/>
            <person name="Baker S."/>
            <person name="Basham D."/>
            <person name="Bason N."/>
            <person name="Cherevach I."/>
            <person name="Chillingworth T."/>
            <person name="Collins M."/>
            <person name="Cronin A."/>
            <person name="Davis P."/>
            <person name="Doggett J."/>
            <person name="Feltwell T."/>
            <person name="Goble A."/>
            <person name="Hamlin N."/>
            <person name="Hauser H."/>
            <person name="Holroyd S."/>
            <person name="Jagels K."/>
            <person name="Leather S."/>
            <person name="Moule S."/>
            <person name="Norberczak H."/>
            <person name="O'Neil S."/>
            <person name="Ormond D."/>
            <person name="Price C."/>
            <person name="Rabbinowitsch E."/>
            <person name="Rutter S."/>
            <person name="Sanders M."/>
            <person name="Saunders D."/>
            <person name="Seeger K."/>
            <person name="Sharp S."/>
            <person name="Simmonds M."/>
            <person name="Skelton J."/>
            <person name="Squares R."/>
            <person name="Squares S."/>
            <person name="Stevens K."/>
            <person name="Unwin L."/>
            <person name="Whitehead S."/>
            <person name="Barrell B.G."/>
            <person name="Maskell D.J."/>
        </authorList>
    </citation>
    <scope>NUCLEOTIDE SEQUENCE [LARGE SCALE GENOMIC DNA]</scope>
    <source>
        <strain>ATCC BAA-588 / NCTC 13252 / RB50</strain>
    </source>
</reference>
<comment type="function">
    <text evidence="1">An accessory protein needed during the final step in the assembly of 30S ribosomal subunit, possibly for assembly of the head region. Essential for efficient processing of 16S rRNA. May be needed both before and after RbfA during the maturation of 16S rRNA. It has affinity for free ribosomal 30S subunits but not for 70S ribosomes.</text>
</comment>
<comment type="subunit">
    <text evidence="1">Binds ribosomal protein uS19.</text>
</comment>
<comment type="subcellular location">
    <subcellularLocation>
        <location evidence="1">Cytoplasm</location>
    </subcellularLocation>
</comment>
<comment type="domain">
    <text evidence="1">The PRC barrel domain binds ribosomal protein uS19.</text>
</comment>
<comment type="similarity">
    <text evidence="1">Belongs to the RimM family.</text>
</comment>
<proteinExistence type="inferred from homology"/>
<keyword id="KW-0143">Chaperone</keyword>
<keyword id="KW-0963">Cytoplasm</keyword>
<keyword id="KW-0690">Ribosome biogenesis</keyword>
<keyword id="KW-0698">rRNA processing</keyword>
<feature type="chain" id="PRO_0000163258" description="Ribosome maturation factor RimM">
    <location>
        <begin position="1"/>
        <end position="207"/>
    </location>
</feature>
<feature type="domain" description="PRC barrel" evidence="1">
    <location>
        <begin position="114"/>
        <end position="207"/>
    </location>
</feature>
<name>RIMM_BORBR</name>
<dbReference type="EMBL" id="BX640446">
    <property type="protein sequence ID" value="CAE33679.1"/>
    <property type="molecule type" value="Genomic_DNA"/>
</dbReference>
<dbReference type="RefSeq" id="WP_003810674.1">
    <property type="nucleotide sequence ID" value="NC_002927.3"/>
</dbReference>
<dbReference type="SMR" id="Q7WHM0"/>
<dbReference type="GeneID" id="93204653"/>
<dbReference type="KEGG" id="bbr:BB3187"/>
<dbReference type="eggNOG" id="COG0806">
    <property type="taxonomic scope" value="Bacteria"/>
</dbReference>
<dbReference type="HOGENOM" id="CLU_077636_1_0_4"/>
<dbReference type="Proteomes" id="UP000001027">
    <property type="component" value="Chromosome"/>
</dbReference>
<dbReference type="GO" id="GO:0005737">
    <property type="term" value="C:cytoplasm"/>
    <property type="evidence" value="ECO:0007669"/>
    <property type="project" value="UniProtKB-SubCell"/>
</dbReference>
<dbReference type="GO" id="GO:0005840">
    <property type="term" value="C:ribosome"/>
    <property type="evidence" value="ECO:0007669"/>
    <property type="project" value="InterPro"/>
</dbReference>
<dbReference type="GO" id="GO:0043022">
    <property type="term" value="F:ribosome binding"/>
    <property type="evidence" value="ECO:0007669"/>
    <property type="project" value="InterPro"/>
</dbReference>
<dbReference type="GO" id="GO:0042274">
    <property type="term" value="P:ribosomal small subunit biogenesis"/>
    <property type="evidence" value="ECO:0007669"/>
    <property type="project" value="UniProtKB-UniRule"/>
</dbReference>
<dbReference type="GO" id="GO:0006364">
    <property type="term" value="P:rRNA processing"/>
    <property type="evidence" value="ECO:0007669"/>
    <property type="project" value="UniProtKB-UniRule"/>
</dbReference>
<dbReference type="Gene3D" id="2.30.30.240">
    <property type="entry name" value="PRC-barrel domain"/>
    <property type="match status" value="1"/>
</dbReference>
<dbReference type="Gene3D" id="2.40.30.60">
    <property type="entry name" value="RimM"/>
    <property type="match status" value="1"/>
</dbReference>
<dbReference type="HAMAP" id="MF_00014">
    <property type="entry name" value="Ribosome_mat_RimM"/>
    <property type="match status" value="1"/>
</dbReference>
<dbReference type="InterPro" id="IPR011033">
    <property type="entry name" value="PRC_barrel-like_sf"/>
</dbReference>
<dbReference type="InterPro" id="IPR056792">
    <property type="entry name" value="PRC_RimM"/>
</dbReference>
<dbReference type="InterPro" id="IPR011961">
    <property type="entry name" value="RimM"/>
</dbReference>
<dbReference type="InterPro" id="IPR002676">
    <property type="entry name" value="RimM_N"/>
</dbReference>
<dbReference type="InterPro" id="IPR036976">
    <property type="entry name" value="RimM_N_sf"/>
</dbReference>
<dbReference type="InterPro" id="IPR009000">
    <property type="entry name" value="Transl_B-barrel_sf"/>
</dbReference>
<dbReference type="NCBIfam" id="TIGR02273">
    <property type="entry name" value="16S_RimM"/>
    <property type="match status" value="1"/>
</dbReference>
<dbReference type="PANTHER" id="PTHR33692">
    <property type="entry name" value="RIBOSOME MATURATION FACTOR RIMM"/>
    <property type="match status" value="1"/>
</dbReference>
<dbReference type="PANTHER" id="PTHR33692:SF1">
    <property type="entry name" value="RIBOSOME MATURATION FACTOR RIMM"/>
    <property type="match status" value="1"/>
</dbReference>
<dbReference type="Pfam" id="PF24986">
    <property type="entry name" value="PRC_RimM"/>
    <property type="match status" value="1"/>
</dbReference>
<dbReference type="Pfam" id="PF01782">
    <property type="entry name" value="RimM"/>
    <property type="match status" value="1"/>
</dbReference>
<dbReference type="SUPFAM" id="SSF50346">
    <property type="entry name" value="PRC-barrel domain"/>
    <property type="match status" value="1"/>
</dbReference>
<dbReference type="SUPFAM" id="SSF50447">
    <property type="entry name" value="Translation proteins"/>
    <property type="match status" value="1"/>
</dbReference>